<sequence length="961" mass="107660">MDEQSVESIAEVFRCFICMEKLRDARLCPHCSKLCCFSCIRRWLTEQRAQCPHCRAPLQLRELVNCRWAEEVTQQLDTLQLCSLTKHEENEKDKCENHHEKLSVFCWTCKKCICHQCALWGGMHGGHTFKPLAEIYEQHVTKVNEEVAKLRRRLMELISLVQEVERNVEAVRNAKDERVREIRNAVEMMIARLDTQLKNKLITLMGQKTSLTQETELLESLLQEVEHQLRSCSKSELISKSSEILMMFQQVHRKPMASFVTTPVPPDFTSELVPSYDSATFVLENFSTLRQRADPVYSPPLQVSGLCWRLKVYPDGNGVVRGYYLSVFLELSAGLPETSKYEYRVEMVHQSCNDPTKNIIREFASDFEVGECWGYNRFFRLDLLANEGYLNRQNDTVILRFQVRSPTFFQKCRDQHWYITQLEAAQTGYIQQINNLKERLTIELSRTQKSRDLSPPDNHLSPQNDDSPETRTKKAGSCSDMLLEGGPTCASVRETKEDEDEEEKIQNEDYHHELSDGDLDLDLVGEDEVNHLDGSSSSASSTATSNTEENDIDEETMSGENDVEYNSMELEEGELMEDAAAAGPPGSSHSYVGASSRMSRRTHLCSAATSSLLDIDPLILIHLLDLKDRSSMENLWGLQPRPSASLLQPTASYSRKDKDQRKQQAMWRVPSDLKMLKRLKTQMAEVRCMKTDVKTTLSDIKGSSVASTDMQTNLFCADQAALTTCGPENSGRLQDLGMELLAKSSVAGCYIRNPTNKKNSPKSARAIAGSLSLRRAVDSGENSRSKGDCQVLAEGSSGSSQSGSRHSSPRALTHGIIGDLLPKSEDRQCKALDSDAVVVAVFNGLPTVEKRRKMVTLGTNAKGGRLEGMQMADLESHSEAGEVQPTLPEGASAAPEEGMSSDSDIECDTENEEQEEHTSMGAFNDPFLAQPPDEDSHSSFPDGEQIDPENLHFNPDEGGGR</sequence>
<comment type="function">
    <text evidence="1 8">E3 ubiquitin-protein ligase required to prevent centriole reduplication (By similarity). Probably acts by ubiquitinating positive regulators of centriole reduplication (By similarity). Mediates monoubiquitination of 'Lys-119' of histone H2A (H2AK119Ub), a specific tag for epigenetic transcriptional repression: associates with some Polycomb group (PcG) multiprotein PRC2-like complex and mediates repression of target genes (PubMed:25470042). Also acts as a positive regulator of peroxisome import by mediating monoubiquitination of PEX5 at 'Lys-472': monoubiquitination promotes PEX5 stabilitation by preventing its polyubiquitination and degradation by the proteasome (By similarity).</text>
</comment>
<comment type="catalytic activity">
    <reaction evidence="1">
        <text>S-ubiquitinyl-[E2 ubiquitin-conjugating enzyme]-L-cysteine + [acceptor protein]-L-lysine = [E2 ubiquitin-conjugating enzyme]-L-cysteine + N(6)-ubiquitinyl-[acceptor protein]-L-lysine.</text>
        <dbReference type="EC" id="2.3.2.27"/>
    </reaction>
</comment>
<comment type="pathway">
    <text evidence="8">Protein modification; protein ubiquitination.</text>
</comment>
<comment type="subunit">
    <text evidence="1">Associates with the PRC2/EED-EZH2 complex.</text>
</comment>
<comment type="subcellular location">
    <subcellularLocation>
        <location evidence="1">Chromosome</location>
    </subcellularLocation>
    <subcellularLocation>
        <location evidence="1">Cytoplasm</location>
        <location evidence="1">Perinuclear region</location>
    </subcellularLocation>
    <subcellularLocation>
        <location evidence="1">Peroxisome membrane</location>
        <topology evidence="1">Peripheral membrane protein</topology>
    </subcellularLocation>
    <text evidence="1">Found in vesicles of the peroxisome. Aggregates as aggresomes, a perinuclear region where certain misfolded or aggregated proteins are sequestered for proteasomal degradation.</text>
</comment>
<comment type="tissue specificity">
    <text evidence="7">Highly expressed in testis and brain. In embryonic tissues, expressed in epithelia, including ducts of the developing pancreas, epithelium of the midgut and nasal epithelium. In adult, detected in the central and peripheral nervous systems, including enteric ganglia, retina and the adrenal medulla (at protein level).</text>
</comment>
<comment type="PTM">
    <text evidence="1">Auto-ubiquitinated.</text>
</comment>
<comment type="similarity">
    <text evidence="10">Belongs to the TRIM/RBCC family.</text>
</comment>
<comment type="sequence caution" evidence="10">
    <conflict type="erroneous initiation">
        <sequence resource="EMBL-CDS" id="BAC41455"/>
    </conflict>
</comment>
<evidence type="ECO:0000250" key="1">
    <source>
        <dbReference type="UniProtKB" id="O94972"/>
    </source>
</evidence>
<evidence type="ECO:0000255" key="2"/>
<evidence type="ECO:0000255" key="3">
    <source>
        <dbReference type="PROSITE-ProRule" id="PRU00024"/>
    </source>
</evidence>
<evidence type="ECO:0000255" key="4">
    <source>
        <dbReference type="PROSITE-ProRule" id="PRU00129"/>
    </source>
</evidence>
<evidence type="ECO:0000255" key="5">
    <source>
        <dbReference type="PROSITE-ProRule" id="PRU00175"/>
    </source>
</evidence>
<evidence type="ECO:0000256" key="6">
    <source>
        <dbReference type="SAM" id="MobiDB-lite"/>
    </source>
</evidence>
<evidence type="ECO:0000269" key="7">
    <source>
    </source>
</evidence>
<evidence type="ECO:0000269" key="8">
    <source>
    </source>
</evidence>
<evidence type="ECO:0000303" key="9">
    <source>
    </source>
</evidence>
<evidence type="ECO:0000305" key="10"/>
<evidence type="ECO:0000312" key="11">
    <source>
        <dbReference type="MGI" id="MGI:2153072"/>
    </source>
</evidence>
<name>TRI37_MOUSE</name>
<organism>
    <name type="scientific">Mus musculus</name>
    <name type="common">Mouse</name>
    <dbReference type="NCBI Taxonomy" id="10090"/>
    <lineage>
        <taxon>Eukaryota</taxon>
        <taxon>Metazoa</taxon>
        <taxon>Chordata</taxon>
        <taxon>Craniata</taxon>
        <taxon>Vertebrata</taxon>
        <taxon>Euteleostomi</taxon>
        <taxon>Mammalia</taxon>
        <taxon>Eutheria</taxon>
        <taxon>Euarchontoglires</taxon>
        <taxon>Glires</taxon>
        <taxon>Rodentia</taxon>
        <taxon>Myomorpha</taxon>
        <taxon>Muroidea</taxon>
        <taxon>Muridae</taxon>
        <taxon>Murinae</taxon>
        <taxon>Mus</taxon>
        <taxon>Mus</taxon>
    </lineage>
</organism>
<reference key="1">
    <citation type="journal article" date="2002" name="DNA Res.">
        <title>Prediction of the coding sequences of mouse homologues of KIAA gene: I. The complete nucleotide sequences of 100 mouse KIAA-homologous cDNAs identified by screening of terminal sequences of cDNA clones randomly sampled from size-fractionated libraries.</title>
        <authorList>
            <person name="Okazaki N."/>
            <person name="Kikuno R."/>
            <person name="Ohara R."/>
            <person name="Inamoto S."/>
            <person name="Hara Y."/>
            <person name="Nagase T."/>
            <person name="Ohara O."/>
            <person name="Koga H."/>
        </authorList>
    </citation>
    <scope>NUCLEOTIDE SEQUENCE [LARGE SCALE MRNA]</scope>
    <source>
        <tissue>Brain</tissue>
    </source>
</reference>
<reference key="2">
    <citation type="journal article" date="2005" name="Science">
        <title>The transcriptional landscape of the mammalian genome.</title>
        <authorList>
            <person name="Carninci P."/>
            <person name="Kasukawa T."/>
            <person name="Katayama S."/>
            <person name="Gough J."/>
            <person name="Frith M.C."/>
            <person name="Maeda N."/>
            <person name="Oyama R."/>
            <person name="Ravasi T."/>
            <person name="Lenhard B."/>
            <person name="Wells C."/>
            <person name="Kodzius R."/>
            <person name="Shimokawa K."/>
            <person name="Bajic V.B."/>
            <person name="Brenner S.E."/>
            <person name="Batalov S."/>
            <person name="Forrest A.R."/>
            <person name="Zavolan M."/>
            <person name="Davis M.J."/>
            <person name="Wilming L.G."/>
            <person name="Aidinis V."/>
            <person name="Allen J.E."/>
            <person name="Ambesi-Impiombato A."/>
            <person name="Apweiler R."/>
            <person name="Aturaliya R.N."/>
            <person name="Bailey T.L."/>
            <person name="Bansal M."/>
            <person name="Baxter L."/>
            <person name="Beisel K.W."/>
            <person name="Bersano T."/>
            <person name="Bono H."/>
            <person name="Chalk A.M."/>
            <person name="Chiu K.P."/>
            <person name="Choudhary V."/>
            <person name="Christoffels A."/>
            <person name="Clutterbuck D.R."/>
            <person name="Crowe M.L."/>
            <person name="Dalla E."/>
            <person name="Dalrymple B.P."/>
            <person name="de Bono B."/>
            <person name="Della Gatta G."/>
            <person name="di Bernardo D."/>
            <person name="Down T."/>
            <person name="Engstrom P."/>
            <person name="Fagiolini M."/>
            <person name="Faulkner G."/>
            <person name="Fletcher C.F."/>
            <person name="Fukushima T."/>
            <person name="Furuno M."/>
            <person name="Futaki S."/>
            <person name="Gariboldi M."/>
            <person name="Georgii-Hemming P."/>
            <person name="Gingeras T.R."/>
            <person name="Gojobori T."/>
            <person name="Green R.E."/>
            <person name="Gustincich S."/>
            <person name="Harbers M."/>
            <person name="Hayashi Y."/>
            <person name="Hensch T.K."/>
            <person name="Hirokawa N."/>
            <person name="Hill D."/>
            <person name="Huminiecki L."/>
            <person name="Iacono M."/>
            <person name="Ikeo K."/>
            <person name="Iwama A."/>
            <person name="Ishikawa T."/>
            <person name="Jakt M."/>
            <person name="Kanapin A."/>
            <person name="Katoh M."/>
            <person name="Kawasawa Y."/>
            <person name="Kelso J."/>
            <person name="Kitamura H."/>
            <person name="Kitano H."/>
            <person name="Kollias G."/>
            <person name="Krishnan S.P."/>
            <person name="Kruger A."/>
            <person name="Kummerfeld S.K."/>
            <person name="Kurochkin I.V."/>
            <person name="Lareau L.F."/>
            <person name="Lazarevic D."/>
            <person name="Lipovich L."/>
            <person name="Liu J."/>
            <person name="Liuni S."/>
            <person name="McWilliam S."/>
            <person name="Madan Babu M."/>
            <person name="Madera M."/>
            <person name="Marchionni L."/>
            <person name="Matsuda H."/>
            <person name="Matsuzawa S."/>
            <person name="Miki H."/>
            <person name="Mignone F."/>
            <person name="Miyake S."/>
            <person name="Morris K."/>
            <person name="Mottagui-Tabar S."/>
            <person name="Mulder N."/>
            <person name="Nakano N."/>
            <person name="Nakauchi H."/>
            <person name="Ng P."/>
            <person name="Nilsson R."/>
            <person name="Nishiguchi S."/>
            <person name="Nishikawa S."/>
            <person name="Nori F."/>
            <person name="Ohara O."/>
            <person name="Okazaki Y."/>
            <person name="Orlando V."/>
            <person name="Pang K.C."/>
            <person name="Pavan W.J."/>
            <person name="Pavesi G."/>
            <person name="Pesole G."/>
            <person name="Petrovsky N."/>
            <person name="Piazza S."/>
            <person name="Reed J."/>
            <person name="Reid J.F."/>
            <person name="Ring B.Z."/>
            <person name="Ringwald M."/>
            <person name="Rost B."/>
            <person name="Ruan Y."/>
            <person name="Salzberg S.L."/>
            <person name="Sandelin A."/>
            <person name="Schneider C."/>
            <person name="Schoenbach C."/>
            <person name="Sekiguchi K."/>
            <person name="Semple C.A."/>
            <person name="Seno S."/>
            <person name="Sessa L."/>
            <person name="Sheng Y."/>
            <person name="Shibata Y."/>
            <person name="Shimada H."/>
            <person name="Shimada K."/>
            <person name="Silva D."/>
            <person name="Sinclair B."/>
            <person name="Sperling S."/>
            <person name="Stupka E."/>
            <person name="Sugiura K."/>
            <person name="Sultana R."/>
            <person name="Takenaka Y."/>
            <person name="Taki K."/>
            <person name="Tammoja K."/>
            <person name="Tan S.L."/>
            <person name="Tang S."/>
            <person name="Taylor M.S."/>
            <person name="Tegner J."/>
            <person name="Teichmann S.A."/>
            <person name="Ueda H.R."/>
            <person name="van Nimwegen E."/>
            <person name="Verardo R."/>
            <person name="Wei C.L."/>
            <person name="Yagi K."/>
            <person name="Yamanishi H."/>
            <person name="Zabarovsky E."/>
            <person name="Zhu S."/>
            <person name="Zimmer A."/>
            <person name="Hide W."/>
            <person name="Bult C."/>
            <person name="Grimmond S.M."/>
            <person name="Teasdale R.D."/>
            <person name="Liu E.T."/>
            <person name="Brusic V."/>
            <person name="Quackenbush J."/>
            <person name="Wahlestedt C."/>
            <person name="Mattick J.S."/>
            <person name="Hume D.A."/>
            <person name="Kai C."/>
            <person name="Sasaki D."/>
            <person name="Tomaru Y."/>
            <person name="Fukuda S."/>
            <person name="Kanamori-Katayama M."/>
            <person name="Suzuki M."/>
            <person name="Aoki J."/>
            <person name="Arakawa T."/>
            <person name="Iida J."/>
            <person name="Imamura K."/>
            <person name="Itoh M."/>
            <person name="Kato T."/>
            <person name="Kawaji H."/>
            <person name="Kawagashira N."/>
            <person name="Kawashima T."/>
            <person name="Kojima M."/>
            <person name="Kondo S."/>
            <person name="Konno H."/>
            <person name="Nakano K."/>
            <person name="Ninomiya N."/>
            <person name="Nishio T."/>
            <person name="Okada M."/>
            <person name="Plessy C."/>
            <person name="Shibata K."/>
            <person name="Shiraki T."/>
            <person name="Suzuki S."/>
            <person name="Tagami M."/>
            <person name="Waki K."/>
            <person name="Watahiki A."/>
            <person name="Okamura-Oho Y."/>
            <person name="Suzuki H."/>
            <person name="Kawai J."/>
            <person name="Hayashizaki Y."/>
        </authorList>
    </citation>
    <scope>NUCLEOTIDE SEQUENCE [LARGE SCALE MRNA]</scope>
    <source>
        <strain>C57BL/6J</strain>
        <tissue>Head</tissue>
    </source>
</reference>
<reference key="3">
    <citation type="journal article" date="2004" name="Genome Res.">
        <title>The status, quality, and expansion of the NIH full-length cDNA project: the Mammalian Gene Collection (MGC).</title>
        <authorList>
            <consortium name="The MGC Project Team"/>
        </authorList>
    </citation>
    <scope>NUCLEOTIDE SEQUENCE [LARGE SCALE MRNA]</scope>
    <source>
        <strain>C57BL/6J</strain>
        <tissue>Brain</tissue>
    </source>
</reference>
<reference key="4">
    <citation type="journal article" date="2006" name="Histochem. Cell Biol.">
        <title>Tissue expression of the mulibrey nanism-associated Trim37 protein in embryonic and adult mouse tissues.</title>
        <authorList>
            <person name="Kallijarvi J."/>
            <person name="Hamalainen R.H."/>
            <person name="Karlberg N."/>
            <person name="Sainio K."/>
            <person name="Lehesjoki A.E."/>
        </authorList>
    </citation>
    <scope>TISSUE SPECIFICITY</scope>
</reference>
<reference key="5">
    <citation type="journal article" date="2010" name="Cell">
        <title>A tissue-specific atlas of mouse protein phosphorylation and expression.</title>
        <authorList>
            <person name="Huttlin E.L."/>
            <person name="Jedrychowski M.P."/>
            <person name="Elias J.E."/>
            <person name="Goswami T."/>
            <person name="Rad R."/>
            <person name="Beausoleil S.A."/>
            <person name="Villen J."/>
            <person name="Haas W."/>
            <person name="Sowa M.E."/>
            <person name="Gygi S.P."/>
        </authorList>
    </citation>
    <scope>IDENTIFICATION BY MASS SPECTROMETRY [LARGE SCALE ANALYSIS]</scope>
    <source>
        <tissue>Testis</tissue>
    </source>
</reference>
<reference key="6">
    <citation type="journal article" date="2014" name="Nature">
        <title>TRIM37 is a new histone H2A ubiquitin ligase and breast cancer oncoprotein.</title>
        <authorList>
            <person name="Bhatnagar S."/>
            <person name="Gazin C."/>
            <person name="Chamberlain L."/>
            <person name="Ou J."/>
            <person name="Zhu X."/>
            <person name="Tushir J.S."/>
            <person name="Virbasius C.M."/>
            <person name="Lin L."/>
            <person name="Zhu L.J."/>
            <person name="Wajapeyee N."/>
            <person name="Green M.R."/>
        </authorList>
    </citation>
    <scope>FUNCTION</scope>
    <scope>PATHWAY</scope>
</reference>
<dbReference type="EC" id="2.3.2.27" evidence="1"/>
<dbReference type="EMBL" id="AB093271">
    <property type="protein sequence ID" value="BAC41455.1"/>
    <property type="status" value="ALT_INIT"/>
    <property type="molecule type" value="Transcribed_RNA"/>
</dbReference>
<dbReference type="EMBL" id="AK140822">
    <property type="protein sequence ID" value="BAE24489.1"/>
    <property type="molecule type" value="mRNA"/>
</dbReference>
<dbReference type="EMBL" id="BC058678">
    <property type="protein sequence ID" value="AAH58678.1"/>
    <property type="molecule type" value="mRNA"/>
</dbReference>
<dbReference type="EMBL" id="BC059070">
    <property type="protein sequence ID" value="AAH59070.1"/>
    <property type="molecule type" value="mRNA"/>
</dbReference>
<dbReference type="CCDS" id="CCDS25210.1"/>
<dbReference type="RefSeq" id="NP_932104.1">
    <property type="nucleotide sequence ID" value="NM_197987.2"/>
</dbReference>
<dbReference type="SMR" id="Q6PCX9"/>
<dbReference type="BioGRID" id="213018">
    <property type="interactions" value="4"/>
</dbReference>
<dbReference type="FunCoup" id="Q6PCX9">
    <property type="interactions" value="3190"/>
</dbReference>
<dbReference type="STRING" id="10090.ENSMUSP00000049057"/>
<dbReference type="GlyGen" id="Q6PCX9">
    <property type="glycosylation" value="2 sites, 1 O-linked glycan (1 site)"/>
</dbReference>
<dbReference type="iPTMnet" id="Q6PCX9"/>
<dbReference type="PhosphoSitePlus" id="Q6PCX9"/>
<dbReference type="PaxDb" id="10090-ENSMUSP00000049057"/>
<dbReference type="ProteomicsDB" id="298217"/>
<dbReference type="Antibodypedia" id="31047">
    <property type="antibodies" value="223 antibodies from 29 providers"/>
</dbReference>
<dbReference type="DNASU" id="68729"/>
<dbReference type="Ensembl" id="ENSMUST00000041282.13">
    <property type="protein sequence ID" value="ENSMUSP00000049057.7"/>
    <property type="gene ID" value="ENSMUSG00000018548.16"/>
</dbReference>
<dbReference type="GeneID" id="68729"/>
<dbReference type="KEGG" id="mmu:68729"/>
<dbReference type="UCSC" id="uc007ktm.2">
    <property type="organism name" value="mouse"/>
</dbReference>
<dbReference type="AGR" id="MGI:2153072"/>
<dbReference type="CTD" id="4591"/>
<dbReference type="MGI" id="MGI:2153072">
    <property type="gene designation" value="Trim37"/>
</dbReference>
<dbReference type="VEuPathDB" id="HostDB:ENSMUSG00000018548"/>
<dbReference type="eggNOG" id="KOG2177">
    <property type="taxonomic scope" value="Eukaryota"/>
</dbReference>
<dbReference type="GeneTree" id="ENSGT00410000025800"/>
<dbReference type="HOGENOM" id="CLU_011183_0_0_1"/>
<dbReference type="InParanoid" id="Q6PCX9"/>
<dbReference type="OMA" id="XERNVEA"/>
<dbReference type="OrthoDB" id="192247at2759"/>
<dbReference type="PhylomeDB" id="Q6PCX9"/>
<dbReference type="TreeFam" id="TF351092"/>
<dbReference type="Reactome" id="R-MMU-983168">
    <property type="pathway name" value="Antigen processing: Ubiquitination &amp; Proteasome degradation"/>
</dbReference>
<dbReference type="UniPathway" id="UPA00143"/>
<dbReference type="BioGRID-ORCS" id="68729">
    <property type="hits" value="8 hits in 79 CRISPR screens"/>
</dbReference>
<dbReference type="ChiTaRS" id="Trim37">
    <property type="organism name" value="mouse"/>
</dbReference>
<dbReference type="PRO" id="PR:Q6PCX9"/>
<dbReference type="Proteomes" id="UP000000589">
    <property type="component" value="Chromosome 11"/>
</dbReference>
<dbReference type="RNAct" id="Q6PCX9">
    <property type="molecule type" value="protein"/>
</dbReference>
<dbReference type="Bgee" id="ENSMUSG00000018548">
    <property type="expression patterns" value="Expressed in spermatocyte and 272 other cell types or tissues"/>
</dbReference>
<dbReference type="ExpressionAtlas" id="Q6PCX9">
    <property type="expression patterns" value="baseline and differential"/>
</dbReference>
<dbReference type="GO" id="GO:0016235">
    <property type="term" value="C:aggresome"/>
    <property type="evidence" value="ECO:0007669"/>
    <property type="project" value="Ensembl"/>
</dbReference>
<dbReference type="GO" id="GO:0005694">
    <property type="term" value="C:chromosome"/>
    <property type="evidence" value="ECO:0007669"/>
    <property type="project" value="UniProtKB-SubCell"/>
</dbReference>
<dbReference type="GO" id="GO:0005737">
    <property type="term" value="C:cytoplasm"/>
    <property type="evidence" value="ECO:0000250"/>
    <property type="project" value="UniProtKB"/>
</dbReference>
<dbReference type="GO" id="GO:0005829">
    <property type="term" value="C:cytosol"/>
    <property type="evidence" value="ECO:0007669"/>
    <property type="project" value="Ensembl"/>
</dbReference>
<dbReference type="GO" id="GO:0035098">
    <property type="term" value="C:ESC/E(Z) complex"/>
    <property type="evidence" value="ECO:0007669"/>
    <property type="project" value="Ensembl"/>
</dbReference>
<dbReference type="GO" id="GO:0048471">
    <property type="term" value="C:perinuclear region of cytoplasm"/>
    <property type="evidence" value="ECO:0007669"/>
    <property type="project" value="UniProtKB-SubCell"/>
</dbReference>
<dbReference type="GO" id="GO:0005778">
    <property type="term" value="C:peroxisomal membrane"/>
    <property type="evidence" value="ECO:0000250"/>
    <property type="project" value="UniProtKB"/>
</dbReference>
<dbReference type="GO" id="GO:0003682">
    <property type="term" value="F:chromatin binding"/>
    <property type="evidence" value="ECO:0000314"/>
    <property type="project" value="MGI"/>
</dbReference>
<dbReference type="GO" id="GO:0140862">
    <property type="term" value="F:histone H2AK119 ubiquitin ligase activity"/>
    <property type="evidence" value="ECO:0007669"/>
    <property type="project" value="Ensembl"/>
</dbReference>
<dbReference type="GO" id="GO:0042803">
    <property type="term" value="F:protein homodimerization activity"/>
    <property type="evidence" value="ECO:0007669"/>
    <property type="project" value="Ensembl"/>
</dbReference>
<dbReference type="GO" id="GO:0003713">
    <property type="term" value="F:transcription coactivator activity"/>
    <property type="evidence" value="ECO:0007669"/>
    <property type="project" value="Ensembl"/>
</dbReference>
<dbReference type="GO" id="GO:0005164">
    <property type="term" value="F:tumor necrosis factor receptor binding"/>
    <property type="evidence" value="ECO:0007669"/>
    <property type="project" value="Ensembl"/>
</dbReference>
<dbReference type="GO" id="GO:0061630">
    <property type="term" value="F:ubiquitin protein ligase activity"/>
    <property type="evidence" value="ECO:0000250"/>
    <property type="project" value="UniProtKB"/>
</dbReference>
<dbReference type="GO" id="GO:0031625">
    <property type="term" value="F:ubiquitin protein ligase binding"/>
    <property type="evidence" value="ECO:0007669"/>
    <property type="project" value="Ensembl"/>
</dbReference>
<dbReference type="GO" id="GO:0008270">
    <property type="term" value="F:zinc ion binding"/>
    <property type="evidence" value="ECO:0007669"/>
    <property type="project" value="UniProtKB-KW"/>
</dbReference>
<dbReference type="GO" id="GO:0070842">
    <property type="term" value="P:aggresome assembly"/>
    <property type="evidence" value="ECO:0007669"/>
    <property type="project" value="Ensembl"/>
</dbReference>
<dbReference type="GO" id="GO:0046600">
    <property type="term" value="P:negative regulation of centriole replication"/>
    <property type="evidence" value="ECO:0000250"/>
    <property type="project" value="UniProtKB"/>
</dbReference>
<dbReference type="GO" id="GO:0045814">
    <property type="term" value="P:negative regulation of gene expression, epigenetic"/>
    <property type="evidence" value="ECO:0000315"/>
    <property type="project" value="UniProtKB"/>
</dbReference>
<dbReference type="GO" id="GO:0000122">
    <property type="term" value="P:negative regulation of transcription by RNA polymerase II"/>
    <property type="evidence" value="ECO:0007669"/>
    <property type="project" value="Ensembl"/>
</dbReference>
<dbReference type="GO" id="GO:0051865">
    <property type="term" value="P:protein autoubiquitination"/>
    <property type="evidence" value="ECO:0007669"/>
    <property type="project" value="Ensembl"/>
</dbReference>
<dbReference type="GO" id="GO:0016558">
    <property type="term" value="P:protein import into peroxisome matrix"/>
    <property type="evidence" value="ECO:0007669"/>
    <property type="project" value="Ensembl"/>
</dbReference>
<dbReference type="GO" id="GO:0006513">
    <property type="term" value="P:protein monoubiquitination"/>
    <property type="evidence" value="ECO:0007669"/>
    <property type="project" value="Ensembl"/>
</dbReference>
<dbReference type="GO" id="GO:0050821">
    <property type="term" value="P:protein stabilization"/>
    <property type="evidence" value="ECO:0007669"/>
    <property type="project" value="Ensembl"/>
</dbReference>
<dbReference type="CDD" id="cd19779">
    <property type="entry name" value="Bbox2_TRIM37_C-VIII"/>
    <property type="match status" value="1"/>
</dbReference>
<dbReference type="CDD" id="cd03773">
    <property type="entry name" value="MATH_TRIM37"/>
    <property type="match status" value="1"/>
</dbReference>
<dbReference type="CDD" id="cd16619">
    <property type="entry name" value="mRING-HC-C4C4_TRIM37_C-VIII"/>
    <property type="match status" value="1"/>
</dbReference>
<dbReference type="FunFam" id="2.60.210.10:FF:000008">
    <property type="entry name" value="E3 ubiquitin-protein ligase TRIM37 isoform X1"/>
    <property type="match status" value="1"/>
</dbReference>
<dbReference type="FunFam" id="3.30.160.60:FF:000332">
    <property type="entry name" value="E3 ubiquitin-protein ligase TRIM37 isoform X1"/>
    <property type="match status" value="1"/>
</dbReference>
<dbReference type="FunFam" id="3.30.40.10:FF:000279">
    <property type="entry name" value="E3 ubiquitin-protein ligase TRIM37 isoform X1"/>
    <property type="match status" value="1"/>
</dbReference>
<dbReference type="Gene3D" id="2.60.210.10">
    <property type="entry name" value="Apoptosis, Tumor Necrosis Factor Receptor Associated Protein 2, Chain A"/>
    <property type="match status" value="1"/>
</dbReference>
<dbReference type="Gene3D" id="3.30.160.60">
    <property type="entry name" value="Classic Zinc Finger"/>
    <property type="match status" value="1"/>
</dbReference>
<dbReference type="Gene3D" id="3.30.40.10">
    <property type="entry name" value="Zinc/RING finger domain, C3HC4 (zinc finger)"/>
    <property type="match status" value="1"/>
</dbReference>
<dbReference type="InterPro" id="IPR003649">
    <property type="entry name" value="Bbox_C"/>
</dbReference>
<dbReference type="InterPro" id="IPR002083">
    <property type="entry name" value="MATH/TRAF_dom"/>
</dbReference>
<dbReference type="InterPro" id="IPR008974">
    <property type="entry name" value="TRAF-like"/>
</dbReference>
<dbReference type="InterPro" id="IPR037299">
    <property type="entry name" value="TRIM37_MATH"/>
</dbReference>
<dbReference type="InterPro" id="IPR053003">
    <property type="entry name" value="TRIM_RBCC_E3_ubiq-ligases"/>
</dbReference>
<dbReference type="InterPro" id="IPR000315">
    <property type="entry name" value="Znf_B-box"/>
</dbReference>
<dbReference type="InterPro" id="IPR001841">
    <property type="entry name" value="Znf_RING"/>
</dbReference>
<dbReference type="InterPro" id="IPR013083">
    <property type="entry name" value="Znf_RING/FYVE/PHD"/>
</dbReference>
<dbReference type="PANTHER" id="PTHR36754">
    <property type="entry name" value="E3 UBIQUITIN-PROTEIN LIGASE TRIM37"/>
    <property type="match status" value="1"/>
</dbReference>
<dbReference type="PANTHER" id="PTHR36754:SF2">
    <property type="entry name" value="E3 UBIQUITIN-PROTEIN LIGASE TRIM37"/>
    <property type="match status" value="1"/>
</dbReference>
<dbReference type="Pfam" id="PF22486">
    <property type="entry name" value="MATH_2"/>
    <property type="match status" value="1"/>
</dbReference>
<dbReference type="Pfam" id="PF00643">
    <property type="entry name" value="zf-B_box"/>
    <property type="match status" value="1"/>
</dbReference>
<dbReference type="SMART" id="SM00502">
    <property type="entry name" value="BBC"/>
    <property type="match status" value="1"/>
</dbReference>
<dbReference type="SMART" id="SM00336">
    <property type="entry name" value="BBOX"/>
    <property type="match status" value="1"/>
</dbReference>
<dbReference type="SMART" id="SM00061">
    <property type="entry name" value="MATH"/>
    <property type="match status" value="1"/>
</dbReference>
<dbReference type="SUPFAM" id="SSF57845">
    <property type="entry name" value="B-box zinc-binding domain"/>
    <property type="match status" value="1"/>
</dbReference>
<dbReference type="SUPFAM" id="SSF57850">
    <property type="entry name" value="RING/U-box"/>
    <property type="match status" value="1"/>
</dbReference>
<dbReference type="SUPFAM" id="SSF49599">
    <property type="entry name" value="TRAF domain-like"/>
    <property type="match status" value="1"/>
</dbReference>
<dbReference type="PROSITE" id="PS50144">
    <property type="entry name" value="MATH"/>
    <property type="match status" value="1"/>
</dbReference>
<dbReference type="PROSITE" id="PS50119">
    <property type="entry name" value="ZF_BBOX"/>
    <property type="match status" value="1"/>
</dbReference>
<dbReference type="PROSITE" id="PS50089">
    <property type="entry name" value="ZF_RING_2"/>
    <property type="match status" value="1"/>
</dbReference>
<protein>
    <recommendedName>
        <fullName evidence="10">E3 ubiquitin-protein ligase TRIM37</fullName>
        <ecNumber evidence="1">2.3.2.27</ecNumber>
    </recommendedName>
    <alternativeName>
        <fullName evidence="10">RING-type E3 ubiquitin transferase TRIM37</fullName>
    </alternativeName>
    <alternativeName>
        <fullName evidence="10">Tripartite motif-containing protein 37</fullName>
    </alternativeName>
</protein>
<accession>Q6PCX9</accession>
<accession>Q5SX31</accession>
<accession>Q8CHC5</accession>
<gene>
    <name evidence="11" type="primary">Trim37</name>
    <name evidence="9" type="synonym">Kiaa0898</name>
</gene>
<feature type="chain" id="PRO_0000056255" description="E3 ubiquitin-protein ligase TRIM37">
    <location>
        <begin position="1"/>
        <end position="961"/>
    </location>
</feature>
<feature type="domain" description="MATH" evidence="4">
    <location>
        <begin position="276"/>
        <end position="403"/>
    </location>
</feature>
<feature type="zinc finger region" description="RING-type; degenerate" evidence="5">
    <location>
        <begin position="15"/>
        <end position="55"/>
    </location>
</feature>
<feature type="zinc finger region" description="B box-type" evidence="3">
    <location>
        <begin position="90"/>
        <end position="132"/>
    </location>
</feature>
<feature type="region of interest" description="Disordered" evidence="6">
    <location>
        <begin position="447"/>
        <end position="514"/>
    </location>
</feature>
<feature type="region of interest" description="Disordered" evidence="6">
    <location>
        <begin position="529"/>
        <end position="561"/>
    </location>
</feature>
<feature type="region of interest" description="Disordered" evidence="6">
    <location>
        <begin position="645"/>
        <end position="665"/>
    </location>
</feature>
<feature type="region of interest" description="Disordered" evidence="6">
    <location>
        <begin position="776"/>
        <end position="811"/>
    </location>
</feature>
<feature type="region of interest" description="Disordered" evidence="6">
    <location>
        <begin position="874"/>
        <end position="961"/>
    </location>
</feature>
<feature type="coiled-coil region" evidence="2">
    <location>
        <begin position="132"/>
        <end position="234"/>
    </location>
</feature>
<feature type="coiled-coil region" evidence="2">
    <location>
        <begin position="419"/>
        <end position="450"/>
    </location>
</feature>
<feature type="compositionally biased region" description="Basic and acidic residues" evidence="6">
    <location>
        <begin position="504"/>
        <end position="514"/>
    </location>
</feature>
<feature type="compositionally biased region" description="Low complexity" evidence="6">
    <location>
        <begin position="535"/>
        <end position="545"/>
    </location>
</feature>
<feature type="compositionally biased region" description="Acidic residues" evidence="6">
    <location>
        <begin position="548"/>
        <end position="561"/>
    </location>
</feature>
<feature type="compositionally biased region" description="Basic and acidic residues" evidence="6">
    <location>
        <begin position="776"/>
        <end position="787"/>
    </location>
</feature>
<feature type="compositionally biased region" description="Low complexity" evidence="6">
    <location>
        <begin position="795"/>
        <end position="806"/>
    </location>
</feature>
<feature type="compositionally biased region" description="Acidic residues" evidence="6">
    <location>
        <begin position="903"/>
        <end position="915"/>
    </location>
</feature>
<feature type="binding site" evidence="3">
    <location>
        <position position="95"/>
    </location>
    <ligand>
        <name>Zn(2+)</name>
        <dbReference type="ChEBI" id="CHEBI:29105"/>
    </ligand>
</feature>
<feature type="binding site" evidence="3">
    <location>
        <position position="98"/>
    </location>
    <ligand>
        <name>Zn(2+)</name>
        <dbReference type="ChEBI" id="CHEBI:29105"/>
    </ligand>
</feature>
<feature type="binding site" evidence="3">
    <location>
        <position position="117"/>
    </location>
    <ligand>
        <name>Zn(2+)</name>
        <dbReference type="ChEBI" id="CHEBI:29105"/>
    </ligand>
</feature>
<feature type="binding site" evidence="3">
    <location>
        <position position="124"/>
    </location>
    <ligand>
        <name>Zn(2+)</name>
        <dbReference type="ChEBI" id="CHEBI:29105"/>
    </ligand>
</feature>
<feature type="modified residue" description="N-acetylmethionine" evidence="1">
    <location>
        <position position="1"/>
    </location>
</feature>
<feature type="modified residue" description="Phosphoserine" evidence="1">
    <location>
        <position position="454"/>
    </location>
</feature>
<feature type="sequence conflict" description="In Ref. 1; BAC41455." evidence="10" ref="1">
    <location>
        <begin position="227"/>
        <end position="232"/>
    </location>
</feature>
<keyword id="KW-0007">Acetylation</keyword>
<keyword id="KW-0158">Chromosome</keyword>
<keyword id="KW-0175">Coiled coil</keyword>
<keyword id="KW-0963">Cytoplasm</keyword>
<keyword id="KW-0472">Membrane</keyword>
<keyword id="KW-0479">Metal-binding</keyword>
<keyword id="KW-0576">Peroxisome</keyword>
<keyword id="KW-0597">Phosphoprotein</keyword>
<keyword id="KW-1185">Reference proteome</keyword>
<keyword id="KW-0808">Transferase</keyword>
<keyword id="KW-0832">Ubl conjugation</keyword>
<keyword id="KW-0833">Ubl conjugation pathway</keyword>
<keyword id="KW-0862">Zinc</keyword>
<keyword id="KW-0863">Zinc-finger</keyword>
<proteinExistence type="evidence at protein level"/>